<proteinExistence type="inferred from homology"/>
<comment type="function">
    <text evidence="1">Catalyzes the interconversion of L-rhamnose and L-rhamnulose.</text>
</comment>
<comment type="catalytic activity">
    <reaction evidence="1">
        <text>L-rhamnopyranose = L-rhamnulose</text>
        <dbReference type="Rhea" id="RHEA:23160"/>
        <dbReference type="ChEBI" id="CHEBI:17897"/>
        <dbReference type="ChEBI" id="CHEBI:62346"/>
        <dbReference type="EC" id="5.3.1.14"/>
    </reaction>
</comment>
<comment type="cofactor">
    <cofactor evidence="1">
        <name>Mn(2+)</name>
        <dbReference type="ChEBI" id="CHEBI:29035"/>
    </cofactor>
    <text evidence="1">Binds 1 Mn(2+) ion per subunit.</text>
</comment>
<comment type="pathway">
    <text evidence="1">Carbohydrate degradation; L-rhamnose degradation; glycerone phosphate from L-rhamnose: step 1/3.</text>
</comment>
<comment type="subunit">
    <text evidence="1">Homotetramer.</text>
</comment>
<comment type="subcellular location">
    <subcellularLocation>
        <location evidence="1">Cytoplasm</location>
    </subcellularLocation>
</comment>
<comment type="similarity">
    <text evidence="1">Belongs to the rhamnose isomerase family.</text>
</comment>
<gene>
    <name evidence="1" type="primary">rhaA</name>
    <name type="ordered locus">YPK_3846</name>
</gene>
<sequence length="418" mass="47160">MTNSIEQAWDLAKQRFAAVGVDVDAALTRLDTLPVSMHCWQGDDVTGFEDPDGVLTGGIQATGNYPGKARNATELRSDLELALALIPGPKRLNLHAIYLESDTPVARNKIEPRHFSHWVAWAKKHQLGLDFNPSCFSHPLSADGFTLSHADPEIRQFWIEHCQASRRVSAYFGEQLGTPSVMNIWIPDGMKDTPIDRLAPRQRLLSALDEVISEKLNPAHHIDAVESKLFGIGAESYTVGSNEFYMGYAASRQTALCLDAGHFHPTEVISDKISSAMLYVPRLLLHVSRPVRWDSDHVVLLDDETQAIASEIIRHNLFDRVHIGLDFFDASINRIAAWVIGTRNMKKALLRALLEPTDRLRQLELRGDYTARLALLEEQKSLPWQAIWEGYCQRNDVPVDARWLDAVREYEQQILSQR</sequence>
<accession>B1JNC9</accession>
<keyword id="KW-0963">Cytoplasm</keyword>
<keyword id="KW-0413">Isomerase</keyword>
<keyword id="KW-0464">Manganese</keyword>
<keyword id="KW-0479">Metal-binding</keyword>
<keyword id="KW-0684">Rhamnose metabolism</keyword>
<dbReference type="EC" id="5.3.1.14" evidence="1"/>
<dbReference type="EMBL" id="CP000950">
    <property type="protein sequence ID" value="ACA70111.1"/>
    <property type="molecule type" value="Genomic_DNA"/>
</dbReference>
<dbReference type="RefSeq" id="WP_002209104.1">
    <property type="nucleotide sequence ID" value="NZ_CP009792.1"/>
</dbReference>
<dbReference type="SMR" id="B1JNC9"/>
<dbReference type="KEGG" id="ypy:YPK_3846"/>
<dbReference type="PATRIC" id="fig|502800.11.peg.193"/>
<dbReference type="UniPathway" id="UPA00541">
    <property type="reaction ID" value="UER00601"/>
</dbReference>
<dbReference type="GO" id="GO:0005737">
    <property type="term" value="C:cytoplasm"/>
    <property type="evidence" value="ECO:0007669"/>
    <property type="project" value="UniProtKB-SubCell"/>
</dbReference>
<dbReference type="GO" id="GO:0008740">
    <property type="term" value="F:L-rhamnose isomerase activity"/>
    <property type="evidence" value="ECO:0007669"/>
    <property type="project" value="UniProtKB-UniRule"/>
</dbReference>
<dbReference type="GO" id="GO:0030145">
    <property type="term" value="F:manganese ion binding"/>
    <property type="evidence" value="ECO:0007669"/>
    <property type="project" value="UniProtKB-UniRule"/>
</dbReference>
<dbReference type="GO" id="GO:0019324">
    <property type="term" value="P:L-lyxose metabolic process"/>
    <property type="evidence" value="ECO:0007669"/>
    <property type="project" value="TreeGrafter"/>
</dbReference>
<dbReference type="GO" id="GO:0019301">
    <property type="term" value="P:rhamnose catabolic process"/>
    <property type="evidence" value="ECO:0007669"/>
    <property type="project" value="UniProtKB-UniRule"/>
</dbReference>
<dbReference type="FunFam" id="3.20.20.150:FF:000006">
    <property type="entry name" value="L-rhamnose isomerase"/>
    <property type="match status" value="1"/>
</dbReference>
<dbReference type="Gene3D" id="3.20.20.150">
    <property type="entry name" value="Divalent-metal-dependent TIM barrel enzymes"/>
    <property type="match status" value="1"/>
</dbReference>
<dbReference type="HAMAP" id="MF_00541">
    <property type="entry name" value="RhaA"/>
    <property type="match status" value="1"/>
</dbReference>
<dbReference type="InterPro" id="IPR050337">
    <property type="entry name" value="L-rhamnose_isomerase"/>
</dbReference>
<dbReference type="InterPro" id="IPR009308">
    <property type="entry name" value="Rhamnose_isomerase"/>
</dbReference>
<dbReference type="InterPro" id="IPR036237">
    <property type="entry name" value="Xyl_isomerase-like_sf"/>
</dbReference>
<dbReference type="NCBIfam" id="NF002203">
    <property type="entry name" value="PRK01076.1"/>
    <property type="match status" value="1"/>
</dbReference>
<dbReference type="NCBIfam" id="TIGR01748">
    <property type="entry name" value="rhaA"/>
    <property type="match status" value="1"/>
</dbReference>
<dbReference type="PANTHER" id="PTHR30268">
    <property type="entry name" value="L-RHAMNOSE ISOMERASE"/>
    <property type="match status" value="1"/>
</dbReference>
<dbReference type="PANTHER" id="PTHR30268:SF0">
    <property type="entry name" value="L-RHAMNOSE ISOMERASE"/>
    <property type="match status" value="1"/>
</dbReference>
<dbReference type="Pfam" id="PF06134">
    <property type="entry name" value="RhaA"/>
    <property type="match status" value="1"/>
</dbReference>
<dbReference type="SUPFAM" id="SSF51658">
    <property type="entry name" value="Xylose isomerase-like"/>
    <property type="match status" value="1"/>
</dbReference>
<evidence type="ECO:0000255" key="1">
    <source>
        <dbReference type="HAMAP-Rule" id="MF_00541"/>
    </source>
</evidence>
<organism>
    <name type="scientific">Yersinia pseudotuberculosis serotype O:3 (strain YPIII)</name>
    <dbReference type="NCBI Taxonomy" id="502800"/>
    <lineage>
        <taxon>Bacteria</taxon>
        <taxon>Pseudomonadati</taxon>
        <taxon>Pseudomonadota</taxon>
        <taxon>Gammaproteobacteria</taxon>
        <taxon>Enterobacterales</taxon>
        <taxon>Yersiniaceae</taxon>
        <taxon>Yersinia</taxon>
    </lineage>
</organism>
<name>RHAA_YERPY</name>
<feature type="chain" id="PRO_1000128896" description="L-rhamnose isomerase">
    <location>
        <begin position="1"/>
        <end position="418"/>
    </location>
</feature>
<feature type="binding site" evidence="1">
    <location>
        <position position="262"/>
    </location>
    <ligand>
        <name>Mn(2+)</name>
        <dbReference type="ChEBI" id="CHEBI:29035"/>
    </ligand>
</feature>
<feature type="binding site" evidence="1">
    <location>
        <position position="294"/>
    </location>
    <ligand>
        <name>Mn(2+)</name>
        <dbReference type="ChEBI" id="CHEBI:29035"/>
    </ligand>
</feature>
<feature type="binding site" evidence="1">
    <location>
        <position position="296"/>
    </location>
    <ligand>
        <name>Mn(2+)</name>
        <dbReference type="ChEBI" id="CHEBI:29035"/>
    </ligand>
</feature>
<protein>
    <recommendedName>
        <fullName evidence="1">L-rhamnose isomerase</fullName>
        <ecNumber evidence="1">5.3.1.14</ecNumber>
    </recommendedName>
</protein>
<reference key="1">
    <citation type="submission" date="2008-02" db="EMBL/GenBank/DDBJ databases">
        <title>Complete sequence of Yersinia pseudotuberculosis YPIII.</title>
        <authorList>
            <consortium name="US DOE Joint Genome Institute"/>
            <person name="Copeland A."/>
            <person name="Lucas S."/>
            <person name="Lapidus A."/>
            <person name="Glavina del Rio T."/>
            <person name="Dalin E."/>
            <person name="Tice H."/>
            <person name="Bruce D."/>
            <person name="Goodwin L."/>
            <person name="Pitluck S."/>
            <person name="Munk A.C."/>
            <person name="Brettin T."/>
            <person name="Detter J.C."/>
            <person name="Han C."/>
            <person name="Tapia R."/>
            <person name="Schmutz J."/>
            <person name="Larimer F."/>
            <person name="Land M."/>
            <person name="Hauser L."/>
            <person name="Challacombe J.F."/>
            <person name="Green L."/>
            <person name="Lindler L.E."/>
            <person name="Nikolich M.P."/>
            <person name="Richardson P."/>
        </authorList>
    </citation>
    <scope>NUCLEOTIDE SEQUENCE [LARGE SCALE GENOMIC DNA]</scope>
    <source>
        <strain>YPIII</strain>
    </source>
</reference>